<reference key="1">
    <citation type="submission" date="2008-06" db="EMBL/GenBank/DDBJ databases">
        <title>Genome and proteome analysis of A. pleuropneumoniae serotype 7.</title>
        <authorList>
            <person name="Linke B."/>
            <person name="Buettner F."/>
            <person name="Martinez-Arias R."/>
            <person name="Goesmann A."/>
            <person name="Baltes N."/>
            <person name="Tegetmeyer H."/>
            <person name="Singh M."/>
            <person name="Gerlach G.F."/>
        </authorList>
    </citation>
    <scope>NUCLEOTIDE SEQUENCE [LARGE SCALE GENOMIC DNA]</scope>
    <source>
        <strain>AP76</strain>
    </source>
</reference>
<evidence type="ECO:0000255" key="1">
    <source>
        <dbReference type="HAMAP-Rule" id="MF_01872"/>
    </source>
</evidence>
<sequence>MTKSQGFQFKQFFIAHDKCAMKVNTDGILLGAIADIRHKRQILDLGTGTGLVAIMLAQRTDENTRISALELEPNAYRQAVENCRNSAFSDRLQVYQGDVLDYHFHQKFDLIVSNPPYFSESLASRSYERDLARAATQSHLDWLLQAKKWLAEQGEISFILPFEAAEKLVEQSRTSGLFCTKICKIITKQGQAAKRMIVSFSAQNVPLEEQELVIYDADNQYTEAFKQLTKAFYLNM</sequence>
<comment type="function">
    <text evidence="1">Specifically methylates the adenine in position 37 of tRNA(1)(Val) (anticodon cmo5UAC).</text>
</comment>
<comment type="catalytic activity">
    <reaction evidence="1">
        <text>adenosine(37) in tRNA1(Val) + S-adenosyl-L-methionine = N(6)-methyladenosine(37) in tRNA1(Val) + S-adenosyl-L-homocysteine + H(+)</text>
        <dbReference type="Rhea" id="RHEA:43160"/>
        <dbReference type="Rhea" id="RHEA-COMP:10369"/>
        <dbReference type="Rhea" id="RHEA-COMP:10370"/>
        <dbReference type="ChEBI" id="CHEBI:15378"/>
        <dbReference type="ChEBI" id="CHEBI:57856"/>
        <dbReference type="ChEBI" id="CHEBI:59789"/>
        <dbReference type="ChEBI" id="CHEBI:74411"/>
        <dbReference type="ChEBI" id="CHEBI:74449"/>
        <dbReference type="EC" id="2.1.1.223"/>
    </reaction>
</comment>
<comment type="subcellular location">
    <subcellularLocation>
        <location evidence="1">Cytoplasm</location>
    </subcellularLocation>
</comment>
<comment type="similarity">
    <text evidence="1">Belongs to the methyltransferase superfamily. tRNA (adenine-N(6)-)-methyltransferase family.</text>
</comment>
<dbReference type="EC" id="2.1.1.223" evidence="1"/>
<dbReference type="EMBL" id="CP001091">
    <property type="protein sequence ID" value="ACE62639.1"/>
    <property type="molecule type" value="Genomic_DNA"/>
</dbReference>
<dbReference type="RefSeq" id="WP_005618344.1">
    <property type="nucleotide sequence ID" value="NC_010939.1"/>
</dbReference>
<dbReference type="SMR" id="B3H2W9"/>
<dbReference type="KEGG" id="apa:APP7_1987"/>
<dbReference type="HOGENOM" id="CLU_061983_0_0_6"/>
<dbReference type="Proteomes" id="UP000001226">
    <property type="component" value="Chromosome"/>
</dbReference>
<dbReference type="GO" id="GO:0005737">
    <property type="term" value="C:cytoplasm"/>
    <property type="evidence" value="ECO:0007669"/>
    <property type="project" value="UniProtKB-SubCell"/>
</dbReference>
<dbReference type="GO" id="GO:0003676">
    <property type="term" value="F:nucleic acid binding"/>
    <property type="evidence" value="ECO:0007669"/>
    <property type="project" value="InterPro"/>
</dbReference>
<dbReference type="GO" id="GO:0016430">
    <property type="term" value="F:tRNA (adenine-N6)-methyltransferase activity"/>
    <property type="evidence" value="ECO:0007669"/>
    <property type="project" value="UniProtKB-UniRule"/>
</dbReference>
<dbReference type="GO" id="GO:0032259">
    <property type="term" value="P:methylation"/>
    <property type="evidence" value="ECO:0007669"/>
    <property type="project" value="UniProtKB-KW"/>
</dbReference>
<dbReference type="GO" id="GO:0008033">
    <property type="term" value="P:tRNA processing"/>
    <property type="evidence" value="ECO:0007669"/>
    <property type="project" value="UniProtKB-UniRule"/>
</dbReference>
<dbReference type="CDD" id="cd02440">
    <property type="entry name" value="AdoMet_MTases"/>
    <property type="match status" value="1"/>
</dbReference>
<dbReference type="Gene3D" id="3.40.50.150">
    <property type="entry name" value="Vaccinia Virus protein VP39"/>
    <property type="match status" value="1"/>
</dbReference>
<dbReference type="HAMAP" id="MF_01872">
    <property type="entry name" value="tRNA_methyltr_YfiC"/>
    <property type="match status" value="1"/>
</dbReference>
<dbReference type="InterPro" id="IPR002052">
    <property type="entry name" value="DNA_methylase_N6_adenine_CS"/>
</dbReference>
<dbReference type="InterPro" id="IPR029063">
    <property type="entry name" value="SAM-dependent_MTases_sf"/>
</dbReference>
<dbReference type="InterPro" id="IPR007848">
    <property type="entry name" value="Small_mtfrase_dom"/>
</dbReference>
<dbReference type="InterPro" id="IPR050210">
    <property type="entry name" value="tRNA_Adenine-N(6)_MTase"/>
</dbReference>
<dbReference type="InterPro" id="IPR022882">
    <property type="entry name" value="tRNA_adenine-N6_MeTrfase"/>
</dbReference>
<dbReference type="PANTHER" id="PTHR47739">
    <property type="entry name" value="TRNA1(VAL) (ADENINE(37)-N6)-METHYLTRANSFERASE"/>
    <property type="match status" value="1"/>
</dbReference>
<dbReference type="PANTHER" id="PTHR47739:SF1">
    <property type="entry name" value="TRNA1(VAL) (ADENINE(37)-N6)-METHYLTRANSFERASE"/>
    <property type="match status" value="1"/>
</dbReference>
<dbReference type="Pfam" id="PF05175">
    <property type="entry name" value="MTS"/>
    <property type="match status" value="1"/>
</dbReference>
<dbReference type="PRINTS" id="PR00507">
    <property type="entry name" value="N12N6MTFRASE"/>
</dbReference>
<dbReference type="SUPFAM" id="SSF53335">
    <property type="entry name" value="S-adenosyl-L-methionine-dependent methyltransferases"/>
    <property type="match status" value="1"/>
</dbReference>
<dbReference type="PROSITE" id="PS00092">
    <property type="entry name" value="N6_MTASE"/>
    <property type="match status" value="1"/>
</dbReference>
<feature type="chain" id="PRO_0000387334" description="tRNA1(Val) (adenine(37)-N6)-methyltransferase">
    <location>
        <begin position="1"/>
        <end position="236"/>
    </location>
</feature>
<proteinExistence type="inferred from homology"/>
<organism>
    <name type="scientific">Actinobacillus pleuropneumoniae serotype 7 (strain AP76)</name>
    <dbReference type="NCBI Taxonomy" id="537457"/>
    <lineage>
        <taxon>Bacteria</taxon>
        <taxon>Pseudomonadati</taxon>
        <taxon>Pseudomonadota</taxon>
        <taxon>Gammaproteobacteria</taxon>
        <taxon>Pasteurellales</taxon>
        <taxon>Pasteurellaceae</taxon>
        <taxon>Actinobacillus</taxon>
    </lineage>
</organism>
<keyword id="KW-0963">Cytoplasm</keyword>
<keyword id="KW-0489">Methyltransferase</keyword>
<keyword id="KW-0949">S-adenosyl-L-methionine</keyword>
<keyword id="KW-0808">Transferase</keyword>
<keyword id="KW-0819">tRNA processing</keyword>
<protein>
    <recommendedName>
        <fullName evidence="1">tRNA1(Val) (adenine(37)-N6)-methyltransferase</fullName>
        <ecNumber evidence="1">2.1.1.223</ecNumber>
    </recommendedName>
    <alternativeName>
        <fullName evidence="1">tRNA m6A37 methyltransferase</fullName>
    </alternativeName>
</protein>
<accession>B3H2W9</accession>
<gene>
    <name type="ordered locus">APP7_1987</name>
</gene>
<name>TRMN6_ACTP7</name>